<organism evidence="2">
    <name type="scientific">Naegleria fowleri</name>
    <name type="common">Brain eating amoeba</name>
    <dbReference type="NCBI Taxonomy" id="5763"/>
    <lineage>
        <taxon>Eukaryota</taxon>
        <taxon>Discoba</taxon>
        <taxon>Heterolobosea</taxon>
        <taxon>Tetramitia</taxon>
        <taxon>Eutetramitia</taxon>
        <taxon>Vahlkampfiidae</taxon>
        <taxon>Naegleria</taxon>
    </lineage>
</organism>
<accession>P83890</accession>
<name>NF15_NAEFO</name>
<reference evidence="2" key="1">
    <citation type="submission" date="2004-04" db="UniProtKB">
        <title>Comparative study of protein profiles on pathogenic and nonpathogenic Naegleria species by 2D-PAGE.</title>
        <authorList>
            <person name="Omura M."/>
            <person name="Furushima-Shimogawara R."/>
            <person name="Izumiyama S."/>
            <person name="Endo T."/>
        </authorList>
    </citation>
    <scope>PROTEIN SEQUENCE</scope>
    <source>
        <strain evidence="2">ATCC 30214 / Nf 66</strain>
    </source>
</reference>
<proteinExistence type="evidence at protein level"/>
<keyword id="KW-0903">Direct protein sequencing</keyword>
<feature type="chain" id="PRO_0000055490" description="Unknown protein NF015 from 2D-PAGE">
    <location>
        <begin position="1"/>
        <end position="20" status="greater than"/>
    </location>
</feature>
<feature type="region of interest" description="Disordered" evidence="1">
    <location>
        <begin position="1"/>
        <end position="20"/>
    </location>
</feature>
<feature type="non-terminal residue" evidence="2">
    <location>
        <position position="20"/>
    </location>
</feature>
<comment type="miscellaneous">
    <text evidence="2">On the 2D-gel the determined pI of this protein is: 6.5, its MW is: 24.1 kDa.</text>
</comment>
<protein>
    <recommendedName>
        <fullName>Unknown protein NF015 from 2D-PAGE</fullName>
    </recommendedName>
</protein>
<evidence type="ECO:0000256" key="1">
    <source>
        <dbReference type="SAM" id="MobiDB-lite"/>
    </source>
</evidence>
<evidence type="ECO:0000305" key="2"/>
<sequence length="20" mass="2210">TPQIQKPAPQFSKTALLPDE</sequence>